<organism>
    <name type="scientific">Mycobacterium sp. (strain KMS)</name>
    <dbReference type="NCBI Taxonomy" id="189918"/>
    <lineage>
        <taxon>Bacteria</taxon>
        <taxon>Bacillati</taxon>
        <taxon>Actinomycetota</taxon>
        <taxon>Actinomycetes</taxon>
        <taxon>Mycobacteriales</taxon>
        <taxon>Mycobacteriaceae</taxon>
        <taxon>Mycobacterium</taxon>
    </lineage>
</organism>
<gene>
    <name evidence="1" type="primary">rnpA</name>
    <name type="ordered locus">Mkms_0007</name>
</gene>
<proteinExistence type="inferred from homology"/>
<evidence type="ECO:0000255" key="1">
    <source>
        <dbReference type="HAMAP-Rule" id="MF_00227"/>
    </source>
</evidence>
<protein>
    <recommendedName>
        <fullName evidence="1">Ribonuclease P protein component</fullName>
        <shortName evidence="1">RNase P protein</shortName>
        <shortName evidence="1">RNaseP protein</shortName>
        <ecNumber evidence="1">3.1.26.5</ecNumber>
    </recommendedName>
    <alternativeName>
        <fullName evidence="1">Protein C5</fullName>
    </alternativeName>
</protein>
<comment type="function">
    <text evidence="1">RNaseP catalyzes the removal of the 5'-leader sequence from pre-tRNA to produce the mature 5'-terminus. It can also cleave other RNA substrates such as 4.5S RNA. The protein component plays an auxiliary but essential role in vivo by binding to the 5'-leader sequence and broadening the substrate specificity of the ribozyme.</text>
</comment>
<comment type="catalytic activity">
    <reaction evidence="1">
        <text>Endonucleolytic cleavage of RNA, removing 5'-extranucleotides from tRNA precursor.</text>
        <dbReference type="EC" id="3.1.26.5"/>
    </reaction>
</comment>
<comment type="subunit">
    <text evidence="1">Consists of a catalytic RNA component (M1 or rnpB) and a protein subunit.</text>
</comment>
<comment type="similarity">
    <text evidence="1">Belongs to the RnpA family.</text>
</comment>
<sequence>MLPARYRMTRSTEFSTTVSKGVRSAQPDLVLHMANVLDDPSGPRVGLVVAKSVGNAVVRHRVSRRLRHSVHPMLDELQPGHRLVIRALPGAASATSARLHQELSAALRRARPRVEASA</sequence>
<keyword id="KW-0255">Endonuclease</keyword>
<keyword id="KW-0378">Hydrolase</keyword>
<keyword id="KW-0540">Nuclease</keyword>
<keyword id="KW-0694">RNA-binding</keyword>
<keyword id="KW-0819">tRNA processing</keyword>
<dbReference type="EC" id="3.1.26.5" evidence="1"/>
<dbReference type="EMBL" id="CP000518">
    <property type="protein sequence ID" value="ABL89226.1"/>
    <property type="molecule type" value="Genomic_DNA"/>
</dbReference>
<dbReference type="SMR" id="A1U8R8"/>
<dbReference type="STRING" id="189918.Mkms_0007"/>
<dbReference type="KEGG" id="mkm:Mkms_0007"/>
<dbReference type="HOGENOM" id="CLU_117179_4_1_11"/>
<dbReference type="OrthoDB" id="196964at2"/>
<dbReference type="GO" id="GO:0030677">
    <property type="term" value="C:ribonuclease P complex"/>
    <property type="evidence" value="ECO:0007669"/>
    <property type="project" value="TreeGrafter"/>
</dbReference>
<dbReference type="GO" id="GO:0042781">
    <property type="term" value="F:3'-tRNA processing endoribonuclease activity"/>
    <property type="evidence" value="ECO:0007669"/>
    <property type="project" value="TreeGrafter"/>
</dbReference>
<dbReference type="GO" id="GO:0004526">
    <property type="term" value="F:ribonuclease P activity"/>
    <property type="evidence" value="ECO:0007669"/>
    <property type="project" value="UniProtKB-UniRule"/>
</dbReference>
<dbReference type="GO" id="GO:0000049">
    <property type="term" value="F:tRNA binding"/>
    <property type="evidence" value="ECO:0007669"/>
    <property type="project" value="UniProtKB-UniRule"/>
</dbReference>
<dbReference type="GO" id="GO:0001682">
    <property type="term" value="P:tRNA 5'-leader removal"/>
    <property type="evidence" value="ECO:0007669"/>
    <property type="project" value="UniProtKB-UniRule"/>
</dbReference>
<dbReference type="Gene3D" id="3.30.230.10">
    <property type="match status" value="1"/>
</dbReference>
<dbReference type="HAMAP" id="MF_00227">
    <property type="entry name" value="RNase_P"/>
    <property type="match status" value="1"/>
</dbReference>
<dbReference type="InterPro" id="IPR020568">
    <property type="entry name" value="Ribosomal_Su5_D2-typ_SF"/>
</dbReference>
<dbReference type="InterPro" id="IPR014721">
    <property type="entry name" value="Ribsml_uS5_D2-typ_fold_subgr"/>
</dbReference>
<dbReference type="InterPro" id="IPR000100">
    <property type="entry name" value="RNase_P"/>
</dbReference>
<dbReference type="NCBIfam" id="TIGR00188">
    <property type="entry name" value="rnpA"/>
    <property type="match status" value="1"/>
</dbReference>
<dbReference type="PANTHER" id="PTHR33992">
    <property type="entry name" value="RIBONUCLEASE P PROTEIN COMPONENT"/>
    <property type="match status" value="1"/>
</dbReference>
<dbReference type="PANTHER" id="PTHR33992:SF1">
    <property type="entry name" value="RIBONUCLEASE P PROTEIN COMPONENT"/>
    <property type="match status" value="1"/>
</dbReference>
<dbReference type="Pfam" id="PF00825">
    <property type="entry name" value="Ribonuclease_P"/>
    <property type="match status" value="1"/>
</dbReference>
<dbReference type="SUPFAM" id="SSF54211">
    <property type="entry name" value="Ribosomal protein S5 domain 2-like"/>
    <property type="match status" value="1"/>
</dbReference>
<feature type="chain" id="PRO_1000021432" description="Ribonuclease P protein component">
    <location>
        <begin position="1"/>
        <end position="118"/>
    </location>
</feature>
<accession>A1U8R8</accession>
<reference key="1">
    <citation type="submission" date="2006-12" db="EMBL/GenBank/DDBJ databases">
        <title>Complete sequence of chromosome of Mycobacterium sp. KMS.</title>
        <authorList>
            <consortium name="US DOE Joint Genome Institute"/>
            <person name="Copeland A."/>
            <person name="Lucas S."/>
            <person name="Lapidus A."/>
            <person name="Barry K."/>
            <person name="Detter J.C."/>
            <person name="Glavina del Rio T."/>
            <person name="Hammon N."/>
            <person name="Israni S."/>
            <person name="Dalin E."/>
            <person name="Tice H."/>
            <person name="Pitluck S."/>
            <person name="Kiss H."/>
            <person name="Brettin T."/>
            <person name="Bruce D."/>
            <person name="Han C."/>
            <person name="Tapia R."/>
            <person name="Gilna P."/>
            <person name="Schmutz J."/>
            <person name="Larimer F."/>
            <person name="Land M."/>
            <person name="Hauser L."/>
            <person name="Kyrpides N."/>
            <person name="Mikhailova N."/>
            <person name="Miller C.D."/>
            <person name="Richardson P."/>
        </authorList>
    </citation>
    <scope>NUCLEOTIDE SEQUENCE [LARGE SCALE GENOMIC DNA]</scope>
    <source>
        <strain>KMS</strain>
    </source>
</reference>
<name>RNPA_MYCSK</name>